<dbReference type="EMBL" id="L19967">
    <property type="protein sequence ID" value="AAA88825.1"/>
    <property type="molecule type" value="Genomic_RNA"/>
</dbReference>
<dbReference type="SMR" id="Q65748"/>
<dbReference type="GO" id="GO:0044423">
    <property type="term" value="C:virion component"/>
    <property type="evidence" value="ECO:0007669"/>
    <property type="project" value="UniProtKB-KW"/>
</dbReference>
<dbReference type="GO" id="GO:0005198">
    <property type="term" value="F:structural molecule activity"/>
    <property type="evidence" value="ECO:0007669"/>
    <property type="project" value="InterPro"/>
</dbReference>
<dbReference type="InterPro" id="IPR002614">
    <property type="entry name" value="Inner_layer_core_VP3_Orbivir"/>
</dbReference>
<dbReference type="InterPro" id="IPR016029">
    <property type="entry name" value="Inner_layer_core_VP3_Reovir"/>
</dbReference>
<dbReference type="Pfam" id="PF01700">
    <property type="entry name" value="Orbi_VP3"/>
    <property type="match status" value="1"/>
</dbReference>
<dbReference type="SUPFAM" id="SSF56831">
    <property type="entry name" value="Reovirus inner layer core protein p3"/>
    <property type="match status" value="1"/>
</dbReference>
<sequence length="901" mass="103225">MAAQNEQRPERIKTTPYLEGDVLSSDSGPLLSVFALQEIMQKVRQVQADYMTATREVDFTVPDVQKILDDIKALTVEQVYKIVKVPSISFRHIVMQSRDRVLRVDTYYEEMSQVGDVITEDEPEKFYSTIIKKVRFIRGKGSFILHDIPTRDHRGMEAAEPEVLGVEFKNVPPVLTAEHRAMIQSALDGSIIENGNVATRDVDVFIGACSEPIYRIYNRLQGYIEAVQLQELRNSIGWLERLGQRKRITYSQEVLTDFRRQDTIWVLALQLPVNPQVVWDVPRSSIANLIMNIATCLPTGEYIAPNPRISSITLTQRITTTGPFAILTGSTPTAQQLNDVRKIYLALMFPGQIILDLKIDPGERMDPAVRMVAGVVGHLLFTAGGRFTNLTQNMARQLDIALNDYLLYMYNTRVQVNYGPTGEPLDFQIGRNQYDCNVFRADFATGTGYNGWATIDVEYRDPAPYVHAQRYIRYCGIDSRELINPTTYGIGMTYHCYNEMLRMLVAAGKDSEAAYFRSMLPFHMVRFARINQIINEDLHSVFSLPDDMFNALLPDLVAGAHQNADPVVLDVSWISLWFAFNRSFEPTHRNEMLEIAPLIESVYASELSVMKVDIRHLSLMQRRFPDVLIQARPSHFWKAVLNDSPEAVKAVMNLSHSHNFINIRDMMRWVLLPSLQPSLKLALEEEAWAAANDFEDLMLTDQVYMHRDMLPEPRLDDIERFRQEGFYYTNMLEAPPEIDRVVQYTYEIARLQADMGQFRAALRRIMDDDDWVRSDGVLRTVRVKFFDARPPDDILQGLPFSYDTNEKGGLSYATIKYATETTIFYLIYNVEFSNTPDSLVLINPTYTMTKVFINKRIVERVRVGQILAVLNRRFVAYKGKMRIMDITQSLKMGTKLAAPTV</sequence>
<reference key="1">
    <citation type="journal article" date="1994" name="Virus Res.">
        <title>Analyses and conservation of sequences among the cognate L3 segments of the five United States bluetongue viruses.</title>
        <authorList>
            <person name="Hwang G.-Y."/>
            <person name="Xiang M."/>
            <person name="Li J.K.-K."/>
        </authorList>
    </citation>
    <scope>NUCLEOTIDE SEQUENCE [GENOMIC RNA]</scope>
</reference>
<proteinExistence type="inferred from homology"/>
<evidence type="ECO:0000305" key="1"/>
<organismHost>
    <name type="scientific">Antilocapra americana</name>
    <name type="common">Pronghorn</name>
    <dbReference type="NCBI Taxonomy" id="9891"/>
</organismHost>
<organismHost>
    <name type="scientific">Bos taurus</name>
    <name type="common">Bovine</name>
    <dbReference type="NCBI Taxonomy" id="9913"/>
</organismHost>
<organismHost>
    <name type="scientific">Capra hircus</name>
    <name type="common">Goat</name>
    <dbReference type="NCBI Taxonomy" id="9925"/>
</organismHost>
<organismHost>
    <name type="scientific">Culicoides variipennis</name>
    <name type="common">Biting midge</name>
    <dbReference type="NCBI Taxonomy" id="46212"/>
</organismHost>
<organismHost>
    <name type="scientific">Ovis aries</name>
    <name type="common">Sheep</name>
    <dbReference type="NCBI Taxonomy" id="9940"/>
</organismHost>
<accession>Q65748</accession>
<comment type="function">
    <text>The VP3 protein is one of the five proteins (with VP1, VP4, VP6 and VP7) which form the inner capsid of the virus.</text>
</comment>
<comment type="subcellular location">
    <subcellularLocation>
        <location evidence="1">Virion</location>
    </subcellularLocation>
</comment>
<comment type="similarity">
    <text evidence="1">Belongs to the orbivirus VP3 family.</text>
</comment>
<feature type="chain" id="PRO_0000222694" description="Core protein VP3">
    <location>
        <begin position="1"/>
        <end position="901"/>
    </location>
</feature>
<protein>
    <recommendedName>
        <fullName>Core protein VP3</fullName>
    </recommendedName>
    <alternativeName>
        <fullName>Major inner capsid protein</fullName>
    </alternativeName>
</protein>
<name>VP3_BTV2A</name>
<organism>
    <name type="scientific">Bluetongue virus 2 (isolate USA)</name>
    <name type="common">BTV 2</name>
    <dbReference type="NCBI Taxonomy" id="10907"/>
    <lineage>
        <taxon>Viruses</taxon>
        <taxon>Riboviria</taxon>
        <taxon>Orthornavirae</taxon>
        <taxon>Duplornaviricota</taxon>
        <taxon>Resentoviricetes</taxon>
        <taxon>Reovirales</taxon>
        <taxon>Sedoreoviridae</taxon>
        <taxon>Orbivirus</taxon>
        <taxon>Bluetongue virus</taxon>
    </lineage>
</organism>
<keyword id="KW-0946">Virion</keyword>
<gene>
    <name type="primary">Segment-3</name>
    <name type="synonym">L3</name>
</gene>